<keyword id="KW-0007">Acetylation</keyword>
<keyword id="KW-0025">Alternative splicing</keyword>
<keyword id="KW-0472">Membrane</keyword>
<keyword id="KW-0496">Mitochondrion</keyword>
<keyword id="KW-1000">Mitochondrion outer membrane</keyword>
<keyword id="KW-1285">Osteoporosis</keyword>
<keyword id="KW-0653">Protein transport</keyword>
<keyword id="KW-1267">Proteomics identification</keyword>
<keyword id="KW-1185">Reference proteome</keyword>
<keyword id="KW-0813">Transport</keyword>
<evidence type="ECO:0000269" key="1">
    <source>
    </source>
</evidence>
<evidence type="ECO:0000269" key="2">
    <source>
    </source>
</evidence>
<evidence type="ECO:0000269" key="3">
    <source>
    </source>
</evidence>
<evidence type="ECO:0000269" key="4">
    <source>
    </source>
</evidence>
<evidence type="ECO:0000303" key="5">
    <source>
    </source>
</evidence>
<evidence type="ECO:0000303" key="6">
    <source>
    </source>
</evidence>
<evidence type="ECO:0000305" key="7"/>
<evidence type="ECO:0007744" key="8">
    <source>
    </source>
</evidence>
<dbReference type="EMBL" id="AF053551">
    <property type="protein sequence ID" value="AAC25105.1"/>
    <property type="molecule type" value="mRNA"/>
</dbReference>
<dbReference type="EMBL" id="AK289359">
    <property type="protein sequence ID" value="BAF82048.1"/>
    <property type="molecule type" value="mRNA"/>
</dbReference>
<dbReference type="EMBL" id="AK303564">
    <property type="protein sequence ID" value="BAG64587.1"/>
    <property type="molecule type" value="mRNA"/>
</dbReference>
<dbReference type="EMBL" id="AC016739">
    <property type="protein sequence ID" value="AAY14795.1"/>
    <property type="molecule type" value="Genomic_DNA"/>
</dbReference>
<dbReference type="EMBL" id="AC073069">
    <property type="protein sequence ID" value="AAX93188.1"/>
    <property type="molecule type" value="Genomic_DNA"/>
</dbReference>
<dbReference type="EMBL" id="CH471058">
    <property type="protein sequence ID" value="EAX11076.1"/>
    <property type="molecule type" value="Genomic_DNA"/>
</dbReference>
<dbReference type="EMBL" id="CH471058">
    <property type="protein sequence ID" value="EAX11078.1"/>
    <property type="molecule type" value="Genomic_DNA"/>
</dbReference>
<dbReference type="EMBL" id="BC017271">
    <property type="protein sequence ID" value="AAH17271.1"/>
    <property type="molecule type" value="mRNA"/>
</dbReference>
<dbReference type="EMBL" id="BC067831">
    <property type="protein sequence ID" value="AAH67831.1"/>
    <property type="molecule type" value="mRNA"/>
</dbReference>
<dbReference type="EMBL" id="BC088359">
    <property type="protein sequence ID" value="AAH88359.1"/>
    <property type="molecule type" value="mRNA"/>
</dbReference>
<dbReference type="CCDS" id="CCDS2272.1">
    <molecule id="O75431-1"/>
</dbReference>
<dbReference type="RefSeq" id="NP_001006636.1">
    <molecule id="O75431-2"/>
    <property type="nucleotide sequence ID" value="NM_001006635.3"/>
</dbReference>
<dbReference type="RefSeq" id="NP_001306026.1">
    <property type="nucleotide sequence ID" value="NM_001319097.1"/>
</dbReference>
<dbReference type="RefSeq" id="NP_001306027.1">
    <property type="nucleotide sequence ID" value="NM_001319098.1"/>
</dbReference>
<dbReference type="RefSeq" id="NP_006545.1">
    <molecule id="O75431-1"/>
    <property type="nucleotide sequence ID" value="NM_006554.5"/>
</dbReference>
<dbReference type="RefSeq" id="XP_047298941.1">
    <molecule id="O75431-2"/>
    <property type="nucleotide sequence ID" value="XM_047442985.1"/>
</dbReference>
<dbReference type="RefSeq" id="XP_054196187.1">
    <molecule id="O75431-2"/>
    <property type="nucleotide sequence ID" value="XM_054340212.1"/>
</dbReference>
<dbReference type="SMR" id="O75431"/>
<dbReference type="BioGRID" id="115894">
    <property type="interactions" value="197"/>
</dbReference>
<dbReference type="ComplexPortal" id="CPX-6133">
    <property type="entry name" value="SAM mitochondrial sorting and assembly machinery complex"/>
</dbReference>
<dbReference type="CORUM" id="O75431"/>
<dbReference type="FunCoup" id="O75431">
    <property type="interactions" value="2569"/>
</dbReference>
<dbReference type="IntAct" id="O75431">
    <property type="interactions" value="70"/>
</dbReference>
<dbReference type="MINT" id="O75431"/>
<dbReference type="STRING" id="9606.ENSP00000249442"/>
<dbReference type="iPTMnet" id="O75431"/>
<dbReference type="PhosphoSitePlus" id="O75431"/>
<dbReference type="SwissPalm" id="O75431"/>
<dbReference type="BioMuta" id="MTX2"/>
<dbReference type="jPOST" id="O75431"/>
<dbReference type="MassIVE" id="O75431"/>
<dbReference type="PaxDb" id="9606-ENSP00000249442"/>
<dbReference type="PeptideAtlas" id="O75431"/>
<dbReference type="ProteomicsDB" id="50001">
    <molecule id="O75431-1"/>
</dbReference>
<dbReference type="ProteomicsDB" id="71282"/>
<dbReference type="Pumba" id="O75431"/>
<dbReference type="TopDownProteomics" id="O75431-1">
    <molecule id="O75431-1"/>
</dbReference>
<dbReference type="Antibodypedia" id="33917">
    <property type="antibodies" value="177 antibodies from 26 providers"/>
</dbReference>
<dbReference type="DNASU" id="10651"/>
<dbReference type="Ensembl" id="ENST00000249442.11">
    <molecule id="O75431-1"/>
    <property type="protein sequence ID" value="ENSP00000249442.6"/>
    <property type="gene ID" value="ENSG00000128654.14"/>
</dbReference>
<dbReference type="GeneID" id="10651"/>
<dbReference type="KEGG" id="hsa:10651"/>
<dbReference type="MANE-Select" id="ENST00000249442.11">
    <property type="protein sequence ID" value="ENSP00000249442.6"/>
    <property type="RefSeq nucleotide sequence ID" value="NM_006554.5"/>
    <property type="RefSeq protein sequence ID" value="NP_006545.1"/>
</dbReference>
<dbReference type="UCSC" id="uc002ukx.4">
    <molecule id="O75431-1"/>
    <property type="organism name" value="human"/>
</dbReference>
<dbReference type="AGR" id="HGNC:7506"/>
<dbReference type="CTD" id="10651"/>
<dbReference type="DisGeNET" id="10651"/>
<dbReference type="GeneCards" id="MTX2"/>
<dbReference type="HGNC" id="HGNC:7506">
    <property type="gene designation" value="MTX2"/>
</dbReference>
<dbReference type="HPA" id="ENSG00000128654">
    <property type="expression patterns" value="Low tissue specificity"/>
</dbReference>
<dbReference type="MalaCards" id="MTX2"/>
<dbReference type="MIM" id="608555">
    <property type="type" value="gene"/>
</dbReference>
<dbReference type="MIM" id="619127">
    <property type="type" value="phenotype"/>
</dbReference>
<dbReference type="neXtProt" id="NX_O75431"/>
<dbReference type="OpenTargets" id="ENSG00000128654"/>
<dbReference type="Orphanet" id="647667">
    <property type="disease" value="Mandibuloacral dysplasia associated to MTX2"/>
</dbReference>
<dbReference type="PharmGKB" id="PA31308"/>
<dbReference type="VEuPathDB" id="HostDB:ENSG00000128654"/>
<dbReference type="eggNOG" id="KOG3027">
    <property type="taxonomic scope" value="Eukaryota"/>
</dbReference>
<dbReference type="GeneTree" id="ENSGT00950000182919"/>
<dbReference type="InParanoid" id="O75431"/>
<dbReference type="OMA" id="YFQTRCL"/>
<dbReference type="OrthoDB" id="198787at2759"/>
<dbReference type="PAN-GO" id="O75431">
    <property type="GO annotations" value="3 GO annotations based on evolutionary models"/>
</dbReference>
<dbReference type="PhylomeDB" id="O75431"/>
<dbReference type="TreeFam" id="TF313422"/>
<dbReference type="PathwayCommons" id="O75431"/>
<dbReference type="Reactome" id="R-HSA-1268020">
    <property type="pathway name" value="Mitochondrial protein import"/>
</dbReference>
<dbReference type="Reactome" id="R-HSA-8949613">
    <property type="pathway name" value="Cristae formation"/>
</dbReference>
<dbReference type="SignaLink" id="O75431"/>
<dbReference type="SIGNOR" id="O75431"/>
<dbReference type="BioGRID-ORCS" id="10651">
    <property type="hits" value="63 hits in 1155 CRISPR screens"/>
</dbReference>
<dbReference type="CD-CODE" id="91857CE7">
    <property type="entry name" value="Nucleolus"/>
</dbReference>
<dbReference type="ChiTaRS" id="MTX2">
    <property type="organism name" value="human"/>
</dbReference>
<dbReference type="GenomeRNAi" id="10651"/>
<dbReference type="Pharos" id="O75431">
    <property type="development level" value="Tbio"/>
</dbReference>
<dbReference type="PRO" id="PR:O75431"/>
<dbReference type="Proteomes" id="UP000005640">
    <property type="component" value="Chromosome 2"/>
</dbReference>
<dbReference type="RNAct" id="O75431">
    <property type="molecule type" value="protein"/>
</dbReference>
<dbReference type="Bgee" id="ENSG00000128654">
    <property type="expression patterns" value="Expressed in hindlimb stylopod muscle and 197 other cell types or tissues"/>
</dbReference>
<dbReference type="ExpressionAtlas" id="O75431">
    <property type="expression patterns" value="baseline and differential"/>
</dbReference>
<dbReference type="GO" id="GO:0005737">
    <property type="term" value="C:cytoplasm"/>
    <property type="evidence" value="ECO:0000318"/>
    <property type="project" value="GO_Central"/>
</dbReference>
<dbReference type="GO" id="GO:0140275">
    <property type="term" value="C:MIB complex"/>
    <property type="evidence" value="ECO:0007005"/>
    <property type="project" value="UniProtKB"/>
</dbReference>
<dbReference type="GO" id="GO:0005741">
    <property type="term" value="C:mitochondrial outer membrane"/>
    <property type="evidence" value="ECO:0000304"/>
    <property type="project" value="ProtInc"/>
</dbReference>
<dbReference type="GO" id="GO:0005739">
    <property type="term" value="C:mitochondrion"/>
    <property type="evidence" value="ECO:0000314"/>
    <property type="project" value="HPA"/>
</dbReference>
<dbReference type="GO" id="GO:0005730">
    <property type="term" value="C:nucleolus"/>
    <property type="evidence" value="ECO:0000314"/>
    <property type="project" value="HPA"/>
</dbReference>
<dbReference type="GO" id="GO:0001401">
    <property type="term" value="C:SAM complex"/>
    <property type="evidence" value="ECO:0000353"/>
    <property type="project" value="ComplexPortal"/>
</dbReference>
<dbReference type="GO" id="GO:0007007">
    <property type="term" value="P:inner mitochondrial membrane organization"/>
    <property type="evidence" value="ECO:0000305"/>
    <property type="project" value="UniProtKB"/>
</dbReference>
<dbReference type="GO" id="GO:0006839">
    <property type="term" value="P:mitochondrial transport"/>
    <property type="evidence" value="ECO:0000315"/>
    <property type="project" value="UniProtKB"/>
</dbReference>
<dbReference type="GO" id="GO:0007005">
    <property type="term" value="P:mitochondrion organization"/>
    <property type="evidence" value="ECO:0000318"/>
    <property type="project" value="GO_Central"/>
</dbReference>
<dbReference type="GO" id="GO:0045040">
    <property type="term" value="P:protein insertion into mitochondrial outer membrane"/>
    <property type="evidence" value="ECO:0000303"/>
    <property type="project" value="ComplexPortal"/>
</dbReference>
<dbReference type="CDD" id="cd03211">
    <property type="entry name" value="GST_C_Metaxin2"/>
    <property type="match status" value="1"/>
</dbReference>
<dbReference type="CDD" id="cd03079">
    <property type="entry name" value="GST_N_Metaxin2"/>
    <property type="match status" value="1"/>
</dbReference>
<dbReference type="FunFam" id="1.20.1050.10:FF:000033">
    <property type="entry name" value="metaxin-2 isoform X1"/>
    <property type="match status" value="1"/>
</dbReference>
<dbReference type="Gene3D" id="1.20.1050.10">
    <property type="match status" value="1"/>
</dbReference>
<dbReference type="InterPro" id="IPR036282">
    <property type="entry name" value="Glutathione-S-Trfase_C_sf"/>
</dbReference>
<dbReference type="InterPro" id="IPR040079">
    <property type="entry name" value="Glutathione_S-Trfase"/>
</dbReference>
<dbReference type="InterPro" id="IPR033468">
    <property type="entry name" value="Metaxin_GST"/>
</dbReference>
<dbReference type="InterPro" id="IPR050931">
    <property type="entry name" value="Mito_Protein_Transport_Metaxin"/>
</dbReference>
<dbReference type="InterPro" id="IPR019564">
    <property type="entry name" value="Sam37/metaxin_N"/>
</dbReference>
<dbReference type="PANTHER" id="PTHR12289">
    <property type="entry name" value="METAXIN RELATED"/>
    <property type="match status" value="1"/>
</dbReference>
<dbReference type="PANTHER" id="PTHR12289:SF38">
    <property type="entry name" value="METAXIN-2"/>
    <property type="match status" value="1"/>
</dbReference>
<dbReference type="Pfam" id="PF17171">
    <property type="entry name" value="GST_C_6"/>
    <property type="match status" value="1"/>
</dbReference>
<dbReference type="Pfam" id="PF10568">
    <property type="entry name" value="Tom37"/>
    <property type="match status" value="1"/>
</dbReference>
<dbReference type="SFLD" id="SFLDS00019">
    <property type="entry name" value="Glutathione_Transferase_(cytos"/>
    <property type="match status" value="1"/>
</dbReference>
<dbReference type="SFLD" id="SFLDG01180">
    <property type="entry name" value="SUF1"/>
    <property type="match status" value="1"/>
</dbReference>
<dbReference type="SUPFAM" id="SSF47616">
    <property type="entry name" value="GST C-terminal domain-like"/>
    <property type="match status" value="1"/>
</dbReference>
<gene>
    <name type="primary">MTX2</name>
</gene>
<reference key="1">
    <citation type="journal article" date="1999" name="J. Cell. Biochem.">
        <title>Metaxin 1 interacts with metaxin 2, a novel related protein associated with the mammalian mitochondrial outer membrane.</title>
        <authorList>
            <person name="Armstrong L.C."/>
            <person name="Saenz A.J."/>
            <person name="Bornstein P."/>
        </authorList>
    </citation>
    <scope>NUCLEOTIDE SEQUENCE [MRNA] (ISOFORM 1)</scope>
    <scope>INTERACTION WITH MTX1</scope>
    <scope>SUBCELLULAR LOCATION</scope>
    <scope>FUNCTION</scope>
</reference>
<reference key="2">
    <citation type="journal article" date="2004" name="Nat. Genet.">
        <title>Complete sequencing and characterization of 21,243 full-length human cDNAs.</title>
        <authorList>
            <person name="Ota T."/>
            <person name="Suzuki Y."/>
            <person name="Nishikawa T."/>
            <person name="Otsuki T."/>
            <person name="Sugiyama T."/>
            <person name="Irie R."/>
            <person name="Wakamatsu A."/>
            <person name="Hayashi K."/>
            <person name="Sato H."/>
            <person name="Nagai K."/>
            <person name="Kimura K."/>
            <person name="Makita H."/>
            <person name="Sekine M."/>
            <person name="Obayashi M."/>
            <person name="Nishi T."/>
            <person name="Shibahara T."/>
            <person name="Tanaka T."/>
            <person name="Ishii S."/>
            <person name="Yamamoto J."/>
            <person name="Saito K."/>
            <person name="Kawai Y."/>
            <person name="Isono Y."/>
            <person name="Nakamura Y."/>
            <person name="Nagahari K."/>
            <person name="Murakami K."/>
            <person name="Yasuda T."/>
            <person name="Iwayanagi T."/>
            <person name="Wagatsuma M."/>
            <person name="Shiratori A."/>
            <person name="Sudo H."/>
            <person name="Hosoiri T."/>
            <person name="Kaku Y."/>
            <person name="Kodaira H."/>
            <person name="Kondo H."/>
            <person name="Sugawara M."/>
            <person name="Takahashi M."/>
            <person name="Kanda K."/>
            <person name="Yokoi T."/>
            <person name="Furuya T."/>
            <person name="Kikkawa E."/>
            <person name="Omura Y."/>
            <person name="Abe K."/>
            <person name="Kamihara K."/>
            <person name="Katsuta N."/>
            <person name="Sato K."/>
            <person name="Tanikawa M."/>
            <person name="Yamazaki M."/>
            <person name="Ninomiya K."/>
            <person name="Ishibashi T."/>
            <person name="Yamashita H."/>
            <person name="Murakawa K."/>
            <person name="Fujimori K."/>
            <person name="Tanai H."/>
            <person name="Kimata M."/>
            <person name="Watanabe M."/>
            <person name="Hiraoka S."/>
            <person name="Chiba Y."/>
            <person name="Ishida S."/>
            <person name="Ono Y."/>
            <person name="Takiguchi S."/>
            <person name="Watanabe S."/>
            <person name="Yosida M."/>
            <person name="Hotuta T."/>
            <person name="Kusano J."/>
            <person name="Kanehori K."/>
            <person name="Takahashi-Fujii A."/>
            <person name="Hara H."/>
            <person name="Tanase T.-O."/>
            <person name="Nomura Y."/>
            <person name="Togiya S."/>
            <person name="Komai F."/>
            <person name="Hara R."/>
            <person name="Takeuchi K."/>
            <person name="Arita M."/>
            <person name="Imose N."/>
            <person name="Musashino K."/>
            <person name="Yuuki H."/>
            <person name="Oshima A."/>
            <person name="Sasaki N."/>
            <person name="Aotsuka S."/>
            <person name="Yoshikawa Y."/>
            <person name="Matsunawa H."/>
            <person name="Ichihara T."/>
            <person name="Shiohata N."/>
            <person name="Sano S."/>
            <person name="Moriya S."/>
            <person name="Momiyama H."/>
            <person name="Satoh N."/>
            <person name="Takami S."/>
            <person name="Terashima Y."/>
            <person name="Suzuki O."/>
            <person name="Nakagawa S."/>
            <person name="Senoh A."/>
            <person name="Mizoguchi H."/>
            <person name="Goto Y."/>
            <person name="Shimizu F."/>
            <person name="Wakebe H."/>
            <person name="Hishigaki H."/>
            <person name="Watanabe T."/>
            <person name="Sugiyama A."/>
            <person name="Takemoto M."/>
            <person name="Kawakami B."/>
            <person name="Yamazaki M."/>
            <person name="Watanabe K."/>
            <person name="Kumagai A."/>
            <person name="Itakura S."/>
            <person name="Fukuzumi Y."/>
            <person name="Fujimori Y."/>
            <person name="Komiyama M."/>
            <person name="Tashiro H."/>
            <person name="Tanigami A."/>
            <person name="Fujiwara T."/>
            <person name="Ono T."/>
            <person name="Yamada K."/>
            <person name="Fujii Y."/>
            <person name="Ozaki K."/>
            <person name="Hirao M."/>
            <person name="Ohmori Y."/>
            <person name="Kawabata A."/>
            <person name="Hikiji T."/>
            <person name="Kobatake N."/>
            <person name="Inagaki H."/>
            <person name="Ikema Y."/>
            <person name="Okamoto S."/>
            <person name="Okitani R."/>
            <person name="Kawakami T."/>
            <person name="Noguchi S."/>
            <person name="Itoh T."/>
            <person name="Shigeta K."/>
            <person name="Senba T."/>
            <person name="Matsumura K."/>
            <person name="Nakajima Y."/>
            <person name="Mizuno T."/>
            <person name="Morinaga M."/>
            <person name="Sasaki M."/>
            <person name="Togashi T."/>
            <person name="Oyama M."/>
            <person name="Hata H."/>
            <person name="Watanabe M."/>
            <person name="Komatsu T."/>
            <person name="Mizushima-Sugano J."/>
            <person name="Satoh T."/>
            <person name="Shirai Y."/>
            <person name="Takahashi Y."/>
            <person name="Nakagawa K."/>
            <person name="Okumura K."/>
            <person name="Nagase T."/>
            <person name="Nomura N."/>
            <person name="Kikuchi H."/>
            <person name="Masuho Y."/>
            <person name="Yamashita R."/>
            <person name="Nakai K."/>
            <person name="Yada T."/>
            <person name="Nakamura Y."/>
            <person name="Ohara O."/>
            <person name="Isogai T."/>
            <person name="Sugano S."/>
        </authorList>
    </citation>
    <scope>NUCLEOTIDE SEQUENCE [LARGE SCALE MRNA] (ISOFORMS 1 AND 2)</scope>
    <source>
        <tissue>Thymus</tissue>
    </source>
</reference>
<reference key="3">
    <citation type="journal article" date="2005" name="Nature">
        <title>Generation and annotation of the DNA sequences of human chromosomes 2 and 4.</title>
        <authorList>
            <person name="Hillier L.W."/>
            <person name="Graves T.A."/>
            <person name="Fulton R.S."/>
            <person name="Fulton L.A."/>
            <person name="Pepin K.H."/>
            <person name="Minx P."/>
            <person name="Wagner-McPherson C."/>
            <person name="Layman D."/>
            <person name="Wylie K."/>
            <person name="Sekhon M."/>
            <person name="Becker M.C."/>
            <person name="Fewell G.A."/>
            <person name="Delehaunty K.D."/>
            <person name="Miner T.L."/>
            <person name="Nash W.E."/>
            <person name="Kremitzki C."/>
            <person name="Oddy L."/>
            <person name="Du H."/>
            <person name="Sun H."/>
            <person name="Bradshaw-Cordum H."/>
            <person name="Ali J."/>
            <person name="Carter J."/>
            <person name="Cordes M."/>
            <person name="Harris A."/>
            <person name="Isak A."/>
            <person name="van Brunt A."/>
            <person name="Nguyen C."/>
            <person name="Du F."/>
            <person name="Courtney L."/>
            <person name="Kalicki J."/>
            <person name="Ozersky P."/>
            <person name="Abbott S."/>
            <person name="Armstrong J."/>
            <person name="Belter E.A."/>
            <person name="Caruso L."/>
            <person name="Cedroni M."/>
            <person name="Cotton M."/>
            <person name="Davidson T."/>
            <person name="Desai A."/>
            <person name="Elliott G."/>
            <person name="Erb T."/>
            <person name="Fronick C."/>
            <person name="Gaige T."/>
            <person name="Haakenson W."/>
            <person name="Haglund K."/>
            <person name="Holmes A."/>
            <person name="Harkins R."/>
            <person name="Kim K."/>
            <person name="Kruchowski S.S."/>
            <person name="Strong C.M."/>
            <person name="Grewal N."/>
            <person name="Goyea E."/>
            <person name="Hou S."/>
            <person name="Levy A."/>
            <person name="Martinka S."/>
            <person name="Mead K."/>
            <person name="McLellan M.D."/>
            <person name="Meyer R."/>
            <person name="Randall-Maher J."/>
            <person name="Tomlinson C."/>
            <person name="Dauphin-Kohlberg S."/>
            <person name="Kozlowicz-Reilly A."/>
            <person name="Shah N."/>
            <person name="Swearengen-Shahid S."/>
            <person name="Snider J."/>
            <person name="Strong J.T."/>
            <person name="Thompson J."/>
            <person name="Yoakum M."/>
            <person name="Leonard S."/>
            <person name="Pearman C."/>
            <person name="Trani L."/>
            <person name="Radionenko M."/>
            <person name="Waligorski J.E."/>
            <person name="Wang C."/>
            <person name="Rock S.M."/>
            <person name="Tin-Wollam A.-M."/>
            <person name="Maupin R."/>
            <person name="Latreille P."/>
            <person name="Wendl M.C."/>
            <person name="Yang S.-P."/>
            <person name="Pohl C."/>
            <person name="Wallis J.W."/>
            <person name="Spieth J."/>
            <person name="Bieri T.A."/>
            <person name="Berkowicz N."/>
            <person name="Nelson J.O."/>
            <person name="Osborne J."/>
            <person name="Ding L."/>
            <person name="Meyer R."/>
            <person name="Sabo A."/>
            <person name="Shotland Y."/>
            <person name="Sinha P."/>
            <person name="Wohldmann P.E."/>
            <person name="Cook L.L."/>
            <person name="Hickenbotham M.T."/>
            <person name="Eldred J."/>
            <person name="Williams D."/>
            <person name="Jones T.A."/>
            <person name="She X."/>
            <person name="Ciccarelli F.D."/>
            <person name="Izaurralde E."/>
            <person name="Taylor J."/>
            <person name="Schmutz J."/>
            <person name="Myers R.M."/>
            <person name="Cox D.R."/>
            <person name="Huang X."/>
            <person name="McPherson J.D."/>
            <person name="Mardis E.R."/>
            <person name="Clifton S.W."/>
            <person name="Warren W.C."/>
            <person name="Chinwalla A.T."/>
            <person name="Eddy S.R."/>
            <person name="Marra M.A."/>
            <person name="Ovcharenko I."/>
            <person name="Furey T.S."/>
            <person name="Miller W."/>
            <person name="Eichler E.E."/>
            <person name="Bork P."/>
            <person name="Suyama M."/>
            <person name="Torrents D."/>
            <person name="Waterston R.H."/>
            <person name="Wilson R.K."/>
        </authorList>
    </citation>
    <scope>NUCLEOTIDE SEQUENCE [LARGE SCALE GENOMIC DNA]</scope>
</reference>
<reference key="4">
    <citation type="submission" date="2005-09" db="EMBL/GenBank/DDBJ databases">
        <authorList>
            <person name="Mural R.J."/>
            <person name="Istrail S."/>
            <person name="Sutton G.G."/>
            <person name="Florea L."/>
            <person name="Halpern A.L."/>
            <person name="Mobarry C.M."/>
            <person name="Lippert R."/>
            <person name="Walenz B."/>
            <person name="Shatkay H."/>
            <person name="Dew I."/>
            <person name="Miller J.R."/>
            <person name="Flanigan M.J."/>
            <person name="Edwards N.J."/>
            <person name="Bolanos R."/>
            <person name="Fasulo D."/>
            <person name="Halldorsson B.V."/>
            <person name="Hannenhalli S."/>
            <person name="Turner R."/>
            <person name="Yooseph S."/>
            <person name="Lu F."/>
            <person name="Nusskern D.R."/>
            <person name="Shue B.C."/>
            <person name="Zheng X.H."/>
            <person name="Zhong F."/>
            <person name="Delcher A.L."/>
            <person name="Huson D.H."/>
            <person name="Kravitz S.A."/>
            <person name="Mouchard L."/>
            <person name="Reinert K."/>
            <person name="Remington K.A."/>
            <person name="Clark A.G."/>
            <person name="Waterman M.S."/>
            <person name="Eichler E.E."/>
            <person name="Adams M.D."/>
            <person name="Hunkapiller M.W."/>
            <person name="Myers E.W."/>
            <person name="Venter J.C."/>
        </authorList>
    </citation>
    <scope>NUCLEOTIDE SEQUENCE [LARGE SCALE GENOMIC DNA]</scope>
</reference>
<reference key="5">
    <citation type="journal article" date="2004" name="Genome Res.">
        <title>The status, quality, and expansion of the NIH full-length cDNA project: the Mammalian Gene Collection (MGC).</title>
        <authorList>
            <consortium name="The MGC Project Team"/>
        </authorList>
    </citation>
    <scope>NUCLEOTIDE SEQUENCE [LARGE SCALE MRNA] (ISOFORMS 1 AND 2)</scope>
    <source>
        <tissue>Testis</tissue>
    </source>
</reference>
<reference key="6">
    <citation type="journal article" date="2011" name="BMC Syst. Biol.">
        <title>Initial characterization of the human central proteome.</title>
        <authorList>
            <person name="Burkard T.R."/>
            <person name="Planyavsky M."/>
            <person name="Kaupe I."/>
            <person name="Breitwieser F.P."/>
            <person name="Buerckstuemmer T."/>
            <person name="Bennett K.L."/>
            <person name="Superti-Furga G."/>
            <person name="Colinge J."/>
        </authorList>
    </citation>
    <scope>IDENTIFICATION BY MASS SPECTROMETRY [LARGE SCALE ANALYSIS]</scope>
</reference>
<reference key="7">
    <citation type="journal article" date="2012" name="Mol. Biol. Cell">
        <title>MINOS1 is a conserved component of mitofilin complexes and required for mitochondrial function and cristae organization.</title>
        <authorList>
            <person name="Alkhaja A.K."/>
            <person name="Jans D.C."/>
            <person name="Nikolov M."/>
            <person name="Vukotic M."/>
            <person name="Lytovchenko O."/>
            <person name="Ludewig F."/>
            <person name="Schliebs W."/>
            <person name="Riedel D."/>
            <person name="Urlaub H."/>
            <person name="Jakobs S."/>
            <person name="Deckers M."/>
        </authorList>
    </citation>
    <scope>INTERACTION WITH THE MINOS/MITOS COMPLEX</scope>
</reference>
<reference key="8">
    <citation type="journal article" date="2015" name="Elife">
        <title>QIL1 is a novel mitochondrial protein required for MICOS complex stability and cristae morphology.</title>
        <authorList>
            <person name="Guarani V."/>
            <person name="McNeill E.M."/>
            <person name="Paulo J.A."/>
            <person name="Huttlin E.L."/>
            <person name="Froehlich F."/>
            <person name="Gygi S.P."/>
            <person name="Van Vactor D."/>
            <person name="Harper J.W."/>
        </authorList>
    </citation>
    <scope>INTERACTION WITH THE MICOS COMPLEX</scope>
    <scope>SUBCELLULAR LOCATION</scope>
</reference>
<reference key="9">
    <citation type="journal article" date="2015" name="Proteomics">
        <title>N-terminome analysis of the human mitochondrial proteome.</title>
        <authorList>
            <person name="Vaca Jacome A.S."/>
            <person name="Rabilloud T."/>
            <person name="Schaeffer-Reiss C."/>
            <person name="Rompais M."/>
            <person name="Ayoub D."/>
            <person name="Lane L."/>
            <person name="Bairoch A."/>
            <person name="Van Dorsselaer A."/>
            <person name="Carapito C."/>
        </authorList>
    </citation>
    <scope>ACETYLATION [LARGE SCALE ANALYSIS] AT SER-2</scope>
    <scope>CLEAVAGE OF INITIATOR METHIONINE [LARGE SCALE ANALYSIS]</scope>
    <scope>IDENTIFICATION BY MASS SPECTROMETRY [LARGE SCALE ANALYSIS]</scope>
</reference>
<reference key="10">
    <citation type="journal article" date="2020" name="Nat. Commun.">
        <title>Loss of MTX2 causes mandibuloacral dysplasia and links mitochondrial dysfunction to altered nuclear morphology.</title>
        <authorList>
            <person name="Elouej S."/>
            <person name="Harhouri K."/>
            <person name="Le Mao M."/>
            <person name="Baujat G."/>
            <person name="Nampoothiri S."/>
            <person name="Kayserili H."/>
            <person name="Menabawy N.A."/>
            <person name="Selim L."/>
            <person name="Paneque A.L."/>
            <person name="Kubisch C."/>
            <person name="Lessel D."/>
            <person name="Rubinsztajn R."/>
            <person name="Charar C."/>
            <person name="Bartoli C."/>
            <person name="Airault C."/>
            <person name="Deleuze J.F."/>
            <person name="Roetig A."/>
            <person name="Bauer P."/>
            <person name="Pereira C."/>
            <person name="Loh A."/>
            <person name="Escande-Beillard N."/>
            <person name="Muchir A."/>
            <person name="Martino L."/>
            <person name="Gruenbaum Y."/>
            <person name="Lee S.H."/>
            <person name="Manivet P."/>
            <person name="Lenaers G."/>
            <person name="Reversade B."/>
            <person name="Levy N."/>
            <person name="De Sandre-Giovannoli A."/>
        </authorList>
    </citation>
    <scope>INVOLVEMENT IN MDPS</scope>
</reference>
<sequence length="263" mass="29763">MSLVAEAFVSQIAAAEPWPENATLYQQLKGEQILLSDNAASLAVQAFLQMCNLPIKVVCRANAEYMSPSGKVPFIHVGNQVVSELGPIVQFVKAKGHSLSDGLEEVQKAEMKAYMELVNNMLLTAELYLQWCDEATVGEITHARYGSPYPWPLNHILAYQKQWEVKRKMKAIGWGKKTLDQVLEDVDQCCQALSQRLGTQPYFFNKQPTELDALVFGHLYTILTTQLTNDELSEKVKNYSNLLAFCRRIEQHYFEDRGKGRLS</sequence>
<feature type="initiator methionine" description="Removed" evidence="8">
    <location>
        <position position="1"/>
    </location>
</feature>
<feature type="chain" id="PRO_0000220995" description="Metaxin-2">
    <location>
        <begin position="2"/>
        <end position="263"/>
    </location>
</feature>
<feature type="modified residue" description="N-acetylserine" evidence="8">
    <location>
        <position position="2"/>
    </location>
</feature>
<feature type="splice variant" id="VSP_054468" description="In isoform 2." evidence="5 6">
    <original>MSLVAEAFVSQIA</original>
    <variation>MYI</variation>
    <location>
        <begin position="1"/>
        <end position="13"/>
    </location>
</feature>
<name>MTX2_HUMAN</name>
<comment type="function">
    <text evidence="1">Involved in transport of proteins into the mitochondrion.</text>
</comment>
<comment type="subunit">
    <text evidence="1 2 3">Interacts with MTX1/metaxin-1. Associates with the mitochondrial contact site and cristae organizing system (MICOS) complex, composed of at least MICOS10/MIC10, CHCHD3/MIC19, CHCHD6/MIC25, APOOL/MIC27, IMMT/MIC60, APOO/MIC23/MIC26 and QIL1/MIC13. This complex was also known under the names MINOS or MitOS complex. The MICOS complex associates with mitochondrial outer membrane proteins SAMM50, MTX1 and MTX2 (together described as components of the mitochondrial outer membrane sorting assembly machinery (SAM) complex) and DNAJC11, mitochondrial inner membrane protein TMEM11 and with HSPA9. The MICOS and SAM complexes together with DNAJC11 are part of a large protein complex spanning both membranes termed the mitochondrial intermembrane space bridging (MIB) complex.</text>
</comment>
<comment type="interaction">
    <interactant intactId="EBI-7415268">
        <id>O75431</id>
    </interactant>
    <interactant intactId="EBI-2817707">
        <id>Q9BXJ5</id>
        <label>C1QTNF2</label>
    </interactant>
    <organismsDiffer>false</organismsDiffer>
    <experiments>3</experiments>
</comment>
<comment type="interaction">
    <interactant intactId="EBI-7415268">
        <id>O75431</id>
    </interactant>
    <interactant intactId="EBI-749265">
        <id>Q8N6L0</id>
        <label>KASH5</label>
    </interactant>
    <organismsDiffer>false</organismsDiffer>
    <experiments>6</experiments>
</comment>
<comment type="interaction">
    <interactant intactId="EBI-7415268">
        <id>O75431</id>
    </interactant>
    <interactant intactId="EBI-1244971">
        <id>Q15669</id>
        <label>RHOH</label>
    </interactant>
    <organismsDiffer>false</organismsDiffer>
    <experiments>3</experiments>
</comment>
<comment type="interaction">
    <interactant intactId="EBI-7415268">
        <id>O75431</id>
    </interactant>
    <interactant intactId="EBI-742268">
        <id>O75478</id>
        <label>TADA2A</label>
    </interactant>
    <organismsDiffer>false</organismsDiffer>
    <experiments>3</experiments>
</comment>
<comment type="interaction">
    <interactant intactId="EBI-7415268">
        <id>O75431</id>
    </interactant>
    <interactant intactId="EBI-947187">
        <id>Q9UHD9</id>
        <label>UBQLN2</label>
    </interactant>
    <organismsDiffer>false</organismsDiffer>
    <experiments>3</experiments>
</comment>
<comment type="subcellular location">
    <subcellularLocation>
        <location evidence="1">Mitochondrion outer membrane</location>
    </subcellularLocation>
    <subcellularLocation>
        <location evidence="3">Mitochondrion</location>
    </subcellularLocation>
</comment>
<comment type="alternative products">
    <event type="alternative splicing"/>
    <isoform>
        <id>O75431-1</id>
        <name>1</name>
        <sequence type="displayed"/>
    </isoform>
    <isoform>
        <id>O75431-2</id>
        <name>2</name>
        <sequence type="described" ref="VSP_054468"/>
    </isoform>
</comment>
<comment type="disease" evidence="4">
    <disease id="DI-05993">
        <name>Mandibuloacral dysplasia progeroid syndrome</name>
        <acronym>MDPS</acronym>
        <description>A form of mandibuloacral dysplasia, a rare progeroid disorder with clinical and genetic heterogeneity, characterized by growth retardation, craniofacial dysmorphic features due to distal bone resorption, musculoskeletal and skin abnormalities associated with lipodystrophy. MDPS is an autosomal recessive disorder. Clinical features include poor growth, osteoporosis, osteopenia, acroosteolysis of distal phalanges, arterial calcification, renal glomerulosclerosis and severe hypertension.</description>
        <dbReference type="MIM" id="619127"/>
    </disease>
    <text>The disease is caused by variants affecting the gene represented in this entry.</text>
</comment>
<comment type="similarity">
    <text evidence="7">Belongs to the metaxin family.</text>
</comment>
<proteinExistence type="evidence at protein level"/>
<protein>
    <recommendedName>
        <fullName>Metaxin-2</fullName>
    </recommendedName>
    <alternativeName>
        <fullName>Mitochondrial outer membrane import complex protein 2</fullName>
    </alternativeName>
</protein>
<accession>O75431</accession>
<accession>A8JZZ4</accession>
<accession>Q53S50</accession>
<accession>Q53SQ2</accession>
<accession>Q5M7Z6</accession>
<accession>Q8IZ68</accession>
<organism>
    <name type="scientific">Homo sapiens</name>
    <name type="common">Human</name>
    <dbReference type="NCBI Taxonomy" id="9606"/>
    <lineage>
        <taxon>Eukaryota</taxon>
        <taxon>Metazoa</taxon>
        <taxon>Chordata</taxon>
        <taxon>Craniata</taxon>
        <taxon>Vertebrata</taxon>
        <taxon>Euteleostomi</taxon>
        <taxon>Mammalia</taxon>
        <taxon>Eutheria</taxon>
        <taxon>Euarchontoglires</taxon>
        <taxon>Primates</taxon>
        <taxon>Haplorrhini</taxon>
        <taxon>Catarrhini</taxon>
        <taxon>Hominidae</taxon>
        <taxon>Homo</taxon>
    </lineage>
</organism>